<keyword id="KW-0687">Ribonucleoprotein</keyword>
<keyword id="KW-0689">Ribosomal protein</keyword>
<keyword id="KW-0694">RNA-binding</keyword>
<keyword id="KW-0699">rRNA-binding</keyword>
<accession>Q11A13</accession>
<dbReference type="EMBL" id="CP000393">
    <property type="protein sequence ID" value="ABG49661.1"/>
    <property type="molecule type" value="Genomic_DNA"/>
</dbReference>
<dbReference type="RefSeq" id="WP_011610059.1">
    <property type="nucleotide sequence ID" value="NC_008312.1"/>
</dbReference>
<dbReference type="SMR" id="Q11A13"/>
<dbReference type="STRING" id="203124.Tery_0169"/>
<dbReference type="KEGG" id="ter:Tery_0169"/>
<dbReference type="eggNOG" id="COG0184">
    <property type="taxonomic scope" value="Bacteria"/>
</dbReference>
<dbReference type="HOGENOM" id="CLU_148518_0_0_3"/>
<dbReference type="OrthoDB" id="9799262at2"/>
<dbReference type="GO" id="GO:0022627">
    <property type="term" value="C:cytosolic small ribosomal subunit"/>
    <property type="evidence" value="ECO:0007669"/>
    <property type="project" value="TreeGrafter"/>
</dbReference>
<dbReference type="GO" id="GO:0019843">
    <property type="term" value="F:rRNA binding"/>
    <property type="evidence" value="ECO:0007669"/>
    <property type="project" value="UniProtKB-UniRule"/>
</dbReference>
<dbReference type="GO" id="GO:0003735">
    <property type="term" value="F:structural constituent of ribosome"/>
    <property type="evidence" value="ECO:0007669"/>
    <property type="project" value="InterPro"/>
</dbReference>
<dbReference type="GO" id="GO:0006412">
    <property type="term" value="P:translation"/>
    <property type="evidence" value="ECO:0007669"/>
    <property type="project" value="UniProtKB-UniRule"/>
</dbReference>
<dbReference type="CDD" id="cd00677">
    <property type="entry name" value="S15_NS1_EPRS_RNA-bind"/>
    <property type="match status" value="1"/>
</dbReference>
<dbReference type="FunFam" id="1.10.287.10:FF:000002">
    <property type="entry name" value="30S ribosomal protein S15"/>
    <property type="match status" value="1"/>
</dbReference>
<dbReference type="Gene3D" id="6.10.250.3130">
    <property type="match status" value="1"/>
</dbReference>
<dbReference type="Gene3D" id="1.10.287.10">
    <property type="entry name" value="S15/NS1, RNA-binding"/>
    <property type="match status" value="1"/>
</dbReference>
<dbReference type="HAMAP" id="MF_01343_B">
    <property type="entry name" value="Ribosomal_uS15_B"/>
    <property type="match status" value="1"/>
</dbReference>
<dbReference type="InterPro" id="IPR000589">
    <property type="entry name" value="Ribosomal_uS15"/>
</dbReference>
<dbReference type="InterPro" id="IPR005290">
    <property type="entry name" value="Ribosomal_uS15_bac-type"/>
</dbReference>
<dbReference type="InterPro" id="IPR009068">
    <property type="entry name" value="uS15_NS1_RNA-bd_sf"/>
</dbReference>
<dbReference type="NCBIfam" id="TIGR00952">
    <property type="entry name" value="S15_bact"/>
    <property type="match status" value="1"/>
</dbReference>
<dbReference type="PANTHER" id="PTHR23321">
    <property type="entry name" value="RIBOSOMAL PROTEIN S15, BACTERIAL AND ORGANELLAR"/>
    <property type="match status" value="1"/>
</dbReference>
<dbReference type="PANTHER" id="PTHR23321:SF26">
    <property type="entry name" value="SMALL RIBOSOMAL SUBUNIT PROTEIN US15M"/>
    <property type="match status" value="1"/>
</dbReference>
<dbReference type="Pfam" id="PF00312">
    <property type="entry name" value="Ribosomal_S15"/>
    <property type="match status" value="1"/>
</dbReference>
<dbReference type="SMART" id="SM01387">
    <property type="entry name" value="Ribosomal_S15"/>
    <property type="match status" value="1"/>
</dbReference>
<dbReference type="SUPFAM" id="SSF47060">
    <property type="entry name" value="S15/NS1 RNA-binding domain"/>
    <property type="match status" value="1"/>
</dbReference>
<dbReference type="PROSITE" id="PS00362">
    <property type="entry name" value="RIBOSOMAL_S15"/>
    <property type="match status" value="1"/>
</dbReference>
<feature type="chain" id="PRO_1000054891" description="Small ribosomal subunit protein uS15">
    <location>
        <begin position="1"/>
        <end position="89"/>
    </location>
</feature>
<reference key="1">
    <citation type="journal article" date="2015" name="Proc. Natl. Acad. Sci. U.S.A.">
        <title>Trichodesmium genome maintains abundant, widespread noncoding DNA in situ, despite oligotrophic lifestyle.</title>
        <authorList>
            <person name="Walworth N."/>
            <person name="Pfreundt U."/>
            <person name="Nelson W.C."/>
            <person name="Mincer T."/>
            <person name="Heidelberg J.F."/>
            <person name="Fu F."/>
            <person name="Waterbury J.B."/>
            <person name="Glavina del Rio T."/>
            <person name="Goodwin L."/>
            <person name="Kyrpides N.C."/>
            <person name="Land M.L."/>
            <person name="Woyke T."/>
            <person name="Hutchins D.A."/>
            <person name="Hess W.R."/>
            <person name="Webb E.A."/>
        </authorList>
    </citation>
    <scope>NUCLEOTIDE SEQUENCE [LARGE SCALE GENOMIC DNA]</scope>
    <source>
        <strain>IMS101</strain>
    </source>
</reference>
<proteinExistence type="inferred from homology"/>
<evidence type="ECO:0000255" key="1">
    <source>
        <dbReference type="HAMAP-Rule" id="MF_01343"/>
    </source>
</evidence>
<evidence type="ECO:0000305" key="2"/>
<sequence length="89" mass="10360">MALKQQRKQEIIGEYQTHETDTGSADVQVAMLTEKITKLSAHLRNNKQDYSSQRGLLKMIGKRKRLLTYIQKQNQERYKALITRLGIRG</sequence>
<organism>
    <name type="scientific">Trichodesmium erythraeum (strain IMS101)</name>
    <dbReference type="NCBI Taxonomy" id="203124"/>
    <lineage>
        <taxon>Bacteria</taxon>
        <taxon>Bacillati</taxon>
        <taxon>Cyanobacteriota</taxon>
        <taxon>Cyanophyceae</taxon>
        <taxon>Oscillatoriophycideae</taxon>
        <taxon>Oscillatoriales</taxon>
        <taxon>Microcoleaceae</taxon>
        <taxon>Trichodesmium</taxon>
    </lineage>
</organism>
<comment type="function">
    <text evidence="1">One of the primary rRNA binding proteins, it binds directly to 16S rRNA where it helps nucleate assembly of the platform of the 30S subunit by binding and bridging several RNA helices of the 16S rRNA.</text>
</comment>
<comment type="function">
    <text evidence="1">Forms an intersubunit bridge (bridge B4) with the 23S rRNA of the 50S subunit in the ribosome.</text>
</comment>
<comment type="subunit">
    <text evidence="1">Part of the 30S ribosomal subunit. Forms a bridge to the 50S subunit in the 70S ribosome, contacting the 23S rRNA.</text>
</comment>
<comment type="similarity">
    <text evidence="1">Belongs to the universal ribosomal protein uS15 family.</text>
</comment>
<protein>
    <recommendedName>
        <fullName evidence="1">Small ribosomal subunit protein uS15</fullName>
    </recommendedName>
    <alternativeName>
        <fullName evidence="2">30S ribosomal protein S15</fullName>
    </alternativeName>
</protein>
<name>RS15_TRIEI</name>
<gene>
    <name evidence="1" type="primary">rpsO</name>
    <name evidence="1" type="synonym">rps15</name>
    <name type="ordered locus">Tery_0169</name>
</gene>